<keyword id="KW-0028">Amino-acid biosynthesis</keyword>
<keyword id="KW-0032">Aminotransferase</keyword>
<keyword id="KW-0963">Cytoplasm</keyword>
<keyword id="KW-0663">Pyridoxal phosphate</keyword>
<keyword id="KW-0718">Serine biosynthesis</keyword>
<keyword id="KW-0808">Transferase</keyword>
<protein>
    <recommendedName>
        <fullName evidence="1">Phosphoserine aminotransferase</fullName>
        <ecNumber evidence="1">2.6.1.52</ecNumber>
    </recommendedName>
    <alternativeName>
        <fullName evidence="1">Phosphohydroxythreonine aminotransferase</fullName>
        <shortName evidence="1">PSAT</shortName>
    </alternativeName>
</protein>
<reference key="1">
    <citation type="journal article" date="2006" name="Proc. Natl. Acad. Sci. U.S.A.">
        <title>Comparative genomics of the lactic acid bacteria.</title>
        <authorList>
            <person name="Makarova K.S."/>
            <person name="Slesarev A."/>
            <person name="Wolf Y.I."/>
            <person name="Sorokin A."/>
            <person name="Mirkin B."/>
            <person name="Koonin E.V."/>
            <person name="Pavlov A."/>
            <person name="Pavlova N."/>
            <person name="Karamychev V."/>
            <person name="Polouchine N."/>
            <person name="Shakhova V."/>
            <person name="Grigoriev I."/>
            <person name="Lou Y."/>
            <person name="Rohksar D."/>
            <person name="Lucas S."/>
            <person name="Huang K."/>
            <person name="Goodstein D.M."/>
            <person name="Hawkins T."/>
            <person name="Plengvidhya V."/>
            <person name="Welker D."/>
            <person name="Hughes J."/>
            <person name="Goh Y."/>
            <person name="Benson A."/>
            <person name="Baldwin K."/>
            <person name="Lee J.-H."/>
            <person name="Diaz-Muniz I."/>
            <person name="Dosti B."/>
            <person name="Smeianov V."/>
            <person name="Wechter W."/>
            <person name="Barabote R."/>
            <person name="Lorca G."/>
            <person name="Altermann E."/>
            <person name="Barrangou R."/>
            <person name="Ganesan B."/>
            <person name="Xie Y."/>
            <person name="Rawsthorne H."/>
            <person name="Tamir D."/>
            <person name="Parker C."/>
            <person name="Breidt F."/>
            <person name="Broadbent J.R."/>
            <person name="Hutkins R."/>
            <person name="O'Sullivan D."/>
            <person name="Steele J."/>
            <person name="Unlu G."/>
            <person name="Saier M.H. Jr."/>
            <person name="Klaenhammer T."/>
            <person name="Richardson P."/>
            <person name="Kozyavkin S."/>
            <person name="Weimer B.C."/>
            <person name="Mills D.A."/>
        </authorList>
    </citation>
    <scope>NUCLEOTIDE SEQUENCE [LARGE SCALE GENOMIC DNA]</scope>
    <source>
        <strain>SK11</strain>
    </source>
</reference>
<evidence type="ECO:0000255" key="1">
    <source>
        <dbReference type="HAMAP-Rule" id="MF_00160"/>
    </source>
</evidence>
<organism>
    <name type="scientific">Lactococcus lactis subsp. cremoris (strain SK11)</name>
    <dbReference type="NCBI Taxonomy" id="272622"/>
    <lineage>
        <taxon>Bacteria</taxon>
        <taxon>Bacillati</taxon>
        <taxon>Bacillota</taxon>
        <taxon>Bacilli</taxon>
        <taxon>Lactobacillales</taxon>
        <taxon>Streptococcaceae</taxon>
        <taxon>Lactococcus</taxon>
        <taxon>Lactococcus cremoris subsp. cremoris</taxon>
    </lineage>
</organism>
<comment type="function">
    <text evidence="1">Catalyzes the reversible conversion of 3-phosphohydroxypyruvate to phosphoserine and of 3-hydroxy-2-oxo-4-phosphonooxybutanoate to phosphohydroxythreonine.</text>
</comment>
<comment type="catalytic activity">
    <reaction evidence="1">
        <text>O-phospho-L-serine + 2-oxoglutarate = 3-phosphooxypyruvate + L-glutamate</text>
        <dbReference type="Rhea" id="RHEA:14329"/>
        <dbReference type="ChEBI" id="CHEBI:16810"/>
        <dbReference type="ChEBI" id="CHEBI:18110"/>
        <dbReference type="ChEBI" id="CHEBI:29985"/>
        <dbReference type="ChEBI" id="CHEBI:57524"/>
        <dbReference type="EC" id="2.6.1.52"/>
    </reaction>
</comment>
<comment type="catalytic activity">
    <reaction evidence="1">
        <text>4-(phosphooxy)-L-threonine + 2-oxoglutarate = (R)-3-hydroxy-2-oxo-4-phosphooxybutanoate + L-glutamate</text>
        <dbReference type="Rhea" id="RHEA:16573"/>
        <dbReference type="ChEBI" id="CHEBI:16810"/>
        <dbReference type="ChEBI" id="CHEBI:29985"/>
        <dbReference type="ChEBI" id="CHEBI:58452"/>
        <dbReference type="ChEBI" id="CHEBI:58538"/>
        <dbReference type="EC" id="2.6.1.52"/>
    </reaction>
</comment>
<comment type="cofactor">
    <cofactor evidence="1">
        <name>pyridoxal 5'-phosphate</name>
        <dbReference type="ChEBI" id="CHEBI:597326"/>
    </cofactor>
    <text evidence="1">Binds 1 pyridoxal phosphate per subunit.</text>
</comment>
<comment type="pathway">
    <text evidence="1">Amino-acid biosynthesis; L-serine biosynthesis; L-serine from 3-phospho-D-glycerate: step 2/3.</text>
</comment>
<comment type="subunit">
    <text evidence="1">Homodimer.</text>
</comment>
<comment type="subcellular location">
    <subcellularLocation>
        <location evidence="1">Cytoplasm</location>
    </subcellularLocation>
</comment>
<comment type="similarity">
    <text evidence="1">Belongs to the class-V pyridoxal-phosphate-dependent aminotransferase family. SerC subfamily.</text>
</comment>
<accession>Q031D5</accession>
<gene>
    <name evidence="1" type="primary">serC</name>
    <name type="ordered locus">LACR_0619</name>
</gene>
<name>SERC_LACLS</name>
<dbReference type="EC" id="2.6.1.52" evidence="1"/>
<dbReference type="EMBL" id="CP000425">
    <property type="protein sequence ID" value="ABJ72187.1"/>
    <property type="molecule type" value="Genomic_DNA"/>
</dbReference>
<dbReference type="RefSeq" id="WP_011675604.1">
    <property type="nucleotide sequence ID" value="NC_008527.1"/>
</dbReference>
<dbReference type="SMR" id="Q031D5"/>
<dbReference type="KEGG" id="llc:LACR_0619"/>
<dbReference type="HOGENOM" id="CLU_034866_0_2_9"/>
<dbReference type="UniPathway" id="UPA00135">
    <property type="reaction ID" value="UER00197"/>
</dbReference>
<dbReference type="Proteomes" id="UP000000240">
    <property type="component" value="Chromosome"/>
</dbReference>
<dbReference type="GO" id="GO:0005737">
    <property type="term" value="C:cytoplasm"/>
    <property type="evidence" value="ECO:0007669"/>
    <property type="project" value="UniProtKB-SubCell"/>
</dbReference>
<dbReference type="GO" id="GO:0004648">
    <property type="term" value="F:O-phospho-L-serine:2-oxoglutarate aminotransferase activity"/>
    <property type="evidence" value="ECO:0007669"/>
    <property type="project" value="UniProtKB-UniRule"/>
</dbReference>
<dbReference type="GO" id="GO:0030170">
    <property type="term" value="F:pyridoxal phosphate binding"/>
    <property type="evidence" value="ECO:0007669"/>
    <property type="project" value="UniProtKB-UniRule"/>
</dbReference>
<dbReference type="GO" id="GO:0006564">
    <property type="term" value="P:L-serine biosynthetic process"/>
    <property type="evidence" value="ECO:0007669"/>
    <property type="project" value="UniProtKB-UniRule"/>
</dbReference>
<dbReference type="FunFam" id="3.40.640.10:FF:000010">
    <property type="entry name" value="Phosphoserine aminotransferase"/>
    <property type="match status" value="1"/>
</dbReference>
<dbReference type="FunFam" id="3.90.1150.10:FF:000006">
    <property type="entry name" value="Phosphoserine aminotransferase"/>
    <property type="match status" value="1"/>
</dbReference>
<dbReference type="Gene3D" id="3.90.1150.10">
    <property type="entry name" value="Aspartate Aminotransferase, domain 1"/>
    <property type="match status" value="1"/>
</dbReference>
<dbReference type="Gene3D" id="3.40.640.10">
    <property type="entry name" value="Type I PLP-dependent aspartate aminotransferase-like (Major domain)"/>
    <property type="match status" value="1"/>
</dbReference>
<dbReference type="HAMAP" id="MF_00160">
    <property type="entry name" value="SerC_aminotrans_5"/>
    <property type="match status" value="1"/>
</dbReference>
<dbReference type="InterPro" id="IPR000192">
    <property type="entry name" value="Aminotrans_V_dom"/>
</dbReference>
<dbReference type="InterPro" id="IPR020578">
    <property type="entry name" value="Aminotrans_V_PyrdxlP_BS"/>
</dbReference>
<dbReference type="InterPro" id="IPR022278">
    <property type="entry name" value="Pser_aminoTfrase"/>
</dbReference>
<dbReference type="InterPro" id="IPR015424">
    <property type="entry name" value="PyrdxlP-dep_Trfase"/>
</dbReference>
<dbReference type="InterPro" id="IPR015421">
    <property type="entry name" value="PyrdxlP-dep_Trfase_major"/>
</dbReference>
<dbReference type="InterPro" id="IPR015422">
    <property type="entry name" value="PyrdxlP-dep_Trfase_small"/>
</dbReference>
<dbReference type="NCBIfam" id="NF003764">
    <property type="entry name" value="PRK05355.1"/>
    <property type="match status" value="1"/>
</dbReference>
<dbReference type="NCBIfam" id="TIGR01364">
    <property type="entry name" value="serC_1"/>
    <property type="match status" value="1"/>
</dbReference>
<dbReference type="PANTHER" id="PTHR43247">
    <property type="entry name" value="PHOSPHOSERINE AMINOTRANSFERASE"/>
    <property type="match status" value="1"/>
</dbReference>
<dbReference type="PANTHER" id="PTHR43247:SF1">
    <property type="entry name" value="PHOSPHOSERINE AMINOTRANSFERASE"/>
    <property type="match status" value="1"/>
</dbReference>
<dbReference type="Pfam" id="PF00266">
    <property type="entry name" value="Aminotran_5"/>
    <property type="match status" value="1"/>
</dbReference>
<dbReference type="PIRSF" id="PIRSF000525">
    <property type="entry name" value="SerC"/>
    <property type="match status" value="1"/>
</dbReference>
<dbReference type="SUPFAM" id="SSF53383">
    <property type="entry name" value="PLP-dependent transferases"/>
    <property type="match status" value="1"/>
</dbReference>
<dbReference type="PROSITE" id="PS00595">
    <property type="entry name" value="AA_TRANSFER_CLASS_5"/>
    <property type="match status" value="1"/>
</dbReference>
<feature type="chain" id="PRO_1000058214" description="Phosphoserine aminotransferase">
    <location>
        <begin position="1"/>
        <end position="365"/>
    </location>
</feature>
<feature type="binding site" evidence="1">
    <location>
        <position position="40"/>
    </location>
    <ligand>
        <name>L-glutamate</name>
        <dbReference type="ChEBI" id="CHEBI:29985"/>
    </ligand>
</feature>
<feature type="binding site" evidence="1">
    <location>
        <begin position="74"/>
        <end position="75"/>
    </location>
    <ligand>
        <name>pyridoxal 5'-phosphate</name>
        <dbReference type="ChEBI" id="CHEBI:597326"/>
    </ligand>
</feature>
<feature type="binding site" evidence="1">
    <location>
        <position position="99"/>
    </location>
    <ligand>
        <name>pyridoxal 5'-phosphate</name>
        <dbReference type="ChEBI" id="CHEBI:597326"/>
    </ligand>
</feature>
<feature type="binding site" evidence="1">
    <location>
        <position position="155"/>
    </location>
    <ligand>
        <name>pyridoxal 5'-phosphate</name>
        <dbReference type="ChEBI" id="CHEBI:597326"/>
    </ligand>
</feature>
<feature type="binding site" evidence="1">
    <location>
        <position position="177"/>
    </location>
    <ligand>
        <name>pyridoxal 5'-phosphate</name>
        <dbReference type="ChEBI" id="CHEBI:597326"/>
    </ligand>
</feature>
<feature type="binding site" evidence="1">
    <location>
        <position position="200"/>
    </location>
    <ligand>
        <name>pyridoxal 5'-phosphate</name>
        <dbReference type="ChEBI" id="CHEBI:597326"/>
    </ligand>
</feature>
<feature type="binding site" evidence="1">
    <location>
        <begin position="241"/>
        <end position="242"/>
    </location>
    <ligand>
        <name>pyridoxal 5'-phosphate</name>
        <dbReference type="ChEBI" id="CHEBI:597326"/>
    </ligand>
</feature>
<feature type="modified residue" description="N6-(pyridoxal phosphate)lysine" evidence="1">
    <location>
        <position position="201"/>
    </location>
</feature>
<proteinExistence type="inferred from homology"/>
<sequence length="365" mass="40816">MIYNFGAGPSVLPKEVLKKVQEELLDFEKSGMSVMEISHRSKSFQEVIDEAQSNLRDLMSIPQNYKILFLQGGASTQFSMIPMNLALGKKAYYAISGAFGKKAYDEAVKLSQTLDFEAISLGSTQSEHYNHLLKIDKSKVDEKMAAYLHITTNNTIEGTTIFPENLPEVNSVPLIADMSSNILAVDYDVSKFGLIYAGAQKNLGIAGLTIVIIREDLLNQKESLSSMMDYRILAQNGSMYNTPPTFAIYLAGLVFKWVKEQGGVKKLEAINRQKARMLYDLIDQSDFYQSPVLNEAERSICNVVFTSPSKELDALFVQKAEEKGFKSIKGHRSVGGMRASIYNAFPIEGVLELVKFMKEFEEENK</sequence>